<evidence type="ECO:0000255" key="1">
    <source>
        <dbReference type="HAMAP-Rule" id="MF_00693"/>
    </source>
</evidence>
<evidence type="ECO:0000256" key="2">
    <source>
        <dbReference type="SAM" id="MobiDB-lite"/>
    </source>
</evidence>
<keyword id="KW-0963">Cytoplasm</keyword>
<keyword id="KW-0238">DNA-binding</keyword>
<keyword id="KW-0804">Transcription</keyword>
<keyword id="KW-0805">Transcription regulation</keyword>
<dbReference type="EMBL" id="AM884177">
    <property type="protein sequence ID" value="CAP07110.1"/>
    <property type="molecule type" value="Genomic_DNA"/>
</dbReference>
<dbReference type="RefSeq" id="WP_009873826.1">
    <property type="nucleotide sequence ID" value="NC_010280.2"/>
</dbReference>
<dbReference type="SMR" id="B0BC95"/>
<dbReference type="KEGG" id="ctl:CTLon_0713"/>
<dbReference type="HOGENOM" id="CLU_062974_3_0_0"/>
<dbReference type="Proteomes" id="UP001154401">
    <property type="component" value="Chromosome"/>
</dbReference>
<dbReference type="GO" id="GO:0005829">
    <property type="term" value="C:cytosol"/>
    <property type="evidence" value="ECO:0007669"/>
    <property type="project" value="TreeGrafter"/>
</dbReference>
<dbReference type="GO" id="GO:0003677">
    <property type="term" value="F:DNA binding"/>
    <property type="evidence" value="ECO:0007669"/>
    <property type="project" value="UniProtKB-UniRule"/>
</dbReference>
<dbReference type="GO" id="GO:0006355">
    <property type="term" value="P:regulation of DNA-templated transcription"/>
    <property type="evidence" value="ECO:0007669"/>
    <property type="project" value="UniProtKB-UniRule"/>
</dbReference>
<dbReference type="FunFam" id="1.10.10.200:FF:000002">
    <property type="entry name" value="Probable transcriptional regulatory protein CLM62_37755"/>
    <property type="match status" value="1"/>
</dbReference>
<dbReference type="Gene3D" id="1.10.10.200">
    <property type="match status" value="1"/>
</dbReference>
<dbReference type="Gene3D" id="3.30.70.980">
    <property type="match status" value="2"/>
</dbReference>
<dbReference type="HAMAP" id="MF_00693">
    <property type="entry name" value="Transcrip_reg_TACO1"/>
    <property type="match status" value="1"/>
</dbReference>
<dbReference type="InterPro" id="IPR017856">
    <property type="entry name" value="Integrase-like_N"/>
</dbReference>
<dbReference type="InterPro" id="IPR048300">
    <property type="entry name" value="TACO1_YebC-like_2nd/3rd_dom"/>
</dbReference>
<dbReference type="InterPro" id="IPR049083">
    <property type="entry name" value="TACO1_YebC_N"/>
</dbReference>
<dbReference type="InterPro" id="IPR002876">
    <property type="entry name" value="Transcrip_reg_TACO1-like"/>
</dbReference>
<dbReference type="InterPro" id="IPR026564">
    <property type="entry name" value="Transcrip_reg_TACO1-like_dom3"/>
</dbReference>
<dbReference type="InterPro" id="IPR029072">
    <property type="entry name" value="YebC-like"/>
</dbReference>
<dbReference type="NCBIfam" id="NF001030">
    <property type="entry name" value="PRK00110.1"/>
    <property type="match status" value="1"/>
</dbReference>
<dbReference type="NCBIfam" id="NF009044">
    <property type="entry name" value="PRK12378.1"/>
    <property type="match status" value="1"/>
</dbReference>
<dbReference type="NCBIfam" id="TIGR01033">
    <property type="entry name" value="YebC/PmpR family DNA-binding transcriptional regulator"/>
    <property type="match status" value="1"/>
</dbReference>
<dbReference type="PANTHER" id="PTHR12532:SF6">
    <property type="entry name" value="TRANSCRIPTIONAL REGULATORY PROTEIN YEBC-RELATED"/>
    <property type="match status" value="1"/>
</dbReference>
<dbReference type="PANTHER" id="PTHR12532">
    <property type="entry name" value="TRANSLATIONAL ACTIVATOR OF CYTOCHROME C OXIDASE 1"/>
    <property type="match status" value="1"/>
</dbReference>
<dbReference type="Pfam" id="PF20772">
    <property type="entry name" value="TACO1_YebC_N"/>
    <property type="match status" value="1"/>
</dbReference>
<dbReference type="Pfam" id="PF01709">
    <property type="entry name" value="Transcrip_reg"/>
    <property type="match status" value="1"/>
</dbReference>
<dbReference type="SUPFAM" id="SSF75625">
    <property type="entry name" value="YebC-like"/>
    <property type="match status" value="1"/>
</dbReference>
<reference key="1">
    <citation type="journal article" date="2008" name="Genome Res.">
        <title>Chlamydia trachomatis: genome sequence analysis of lymphogranuloma venereum isolates.</title>
        <authorList>
            <person name="Thomson N.R."/>
            <person name="Holden M.T.G."/>
            <person name="Carder C."/>
            <person name="Lennard N."/>
            <person name="Lockey S.J."/>
            <person name="Marsh P."/>
            <person name="Skipp P."/>
            <person name="O'Connor C.D."/>
            <person name="Goodhead I."/>
            <person name="Norbertzcak H."/>
            <person name="Harris B."/>
            <person name="Ormond D."/>
            <person name="Rance R."/>
            <person name="Quail M.A."/>
            <person name="Parkhill J."/>
            <person name="Stephens R.S."/>
            <person name="Clarke I.N."/>
        </authorList>
    </citation>
    <scope>NUCLEOTIDE SEQUENCE [LARGE SCALE GENOMIC DNA]</scope>
    <source>
        <strain>UCH-1/proctitis</strain>
    </source>
</reference>
<sequence>MAGHSKWANTKHRKERADHKKGKIFSRTIKELISAVKMGGPDPKSNARLRMIIQKAKDQNIPNENIERNLKKASSADQKNYEEVTYELYGFGGVGIIVEAMTDNKNRTASDMRVAVNKRGGALVEPGSVLYNFSRKGACYVPKHSIDEASLLTHVIDCGGEDLDSDDEEFFLVLCEPTDLASVKEALLAKGVTCSEERLIYVPLRLVDCDEETGKSNLALIEWLENIDDVDDVYHNMA</sequence>
<feature type="chain" id="PRO_1000132173" description="Probable transcriptional regulatory protein CTLon_0713">
    <location>
        <begin position="1"/>
        <end position="238"/>
    </location>
</feature>
<feature type="region of interest" description="Disordered" evidence="2">
    <location>
        <begin position="1"/>
        <end position="21"/>
    </location>
</feature>
<feature type="compositionally biased region" description="Basic residues" evidence="2">
    <location>
        <begin position="9"/>
        <end position="21"/>
    </location>
</feature>
<name>Y713_CHLTB</name>
<organism>
    <name type="scientific">Chlamydia trachomatis serovar L2b (strain UCH-1/proctitis)</name>
    <dbReference type="NCBI Taxonomy" id="471473"/>
    <lineage>
        <taxon>Bacteria</taxon>
        <taxon>Pseudomonadati</taxon>
        <taxon>Chlamydiota</taxon>
        <taxon>Chlamydiia</taxon>
        <taxon>Chlamydiales</taxon>
        <taxon>Chlamydiaceae</taxon>
        <taxon>Chlamydia/Chlamydophila group</taxon>
        <taxon>Chlamydia</taxon>
    </lineage>
</organism>
<gene>
    <name type="ordered locus">CTLon_0713</name>
</gene>
<protein>
    <recommendedName>
        <fullName evidence="1">Probable transcriptional regulatory protein CTLon_0713</fullName>
    </recommendedName>
</protein>
<comment type="subcellular location">
    <subcellularLocation>
        <location evidence="1">Cytoplasm</location>
    </subcellularLocation>
</comment>
<comment type="similarity">
    <text evidence="1">Belongs to the TACO1 family.</text>
</comment>
<proteinExistence type="inferred from homology"/>
<accession>B0BC95</accession>